<proteinExistence type="inferred from homology"/>
<dbReference type="EMBL" id="CP000233">
    <property type="protein sequence ID" value="ABE00237.1"/>
    <property type="molecule type" value="Genomic_DNA"/>
</dbReference>
<dbReference type="RefSeq" id="WP_003701304.1">
    <property type="nucleotide sequence ID" value="NC_007929.1"/>
</dbReference>
<dbReference type="RefSeq" id="YP_536320.1">
    <property type="nucleotide sequence ID" value="NC_007929.1"/>
</dbReference>
<dbReference type="SMR" id="Q1WS92"/>
<dbReference type="STRING" id="362948.LSL_1433"/>
<dbReference type="KEGG" id="lsl:LSL_1433"/>
<dbReference type="PATRIC" id="fig|362948.14.peg.1516"/>
<dbReference type="HOGENOM" id="CLU_037562_3_2_9"/>
<dbReference type="OrthoDB" id="9793353at2"/>
<dbReference type="Proteomes" id="UP000006559">
    <property type="component" value="Chromosome"/>
</dbReference>
<dbReference type="GO" id="GO:1990904">
    <property type="term" value="C:ribonucleoprotein complex"/>
    <property type="evidence" value="ECO:0007669"/>
    <property type="project" value="UniProtKB-KW"/>
</dbReference>
<dbReference type="GO" id="GO:0005840">
    <property type="term" value="C:ribosome"/>
    <property type="evidence" value="ECO:0007669"/>
    <property type="project" value="UniProtKB-KW"/>
</dbReference>
<dbReference type="GO" id="GO:0019843">
    <property type="term" value="F:rRNA binding"/>
    <property type="evidence" value="ECO:0007669"/>
    <property type="project" value="UniProtKB-UniRule"/>
</dbReference>
<dbReference type="GO" id="GO:0003735">
    <property type="term" value="F:structural constituent of ribosome"/>
    <property type="evidence" value="ECO:0007669"/>
    <property type="project" value="InterPro"/>
</dbReference>
<dbReference type="GO" id="GO:0006412">
    <property type="term" value="P:translation"/>
    <property type="evidence" value="ECO:0007669"/>
    <property type="project" value="UniProtKB-UniRule"/>
</dbReference>
<dbReference type="FunFam" id="3.30.70.330:FF:000001">
    <property type="entry name" value="50S ribosomal protein L23"/>
    <property type="match status" value="1"/>
</dbReference>
<dbReference type="Gene3D" id="3.30.70.330">
    <property type="match status" value="1"/>
</dbReference>
<dbReference type="HAMAP" id="MF_01369_B">
    <property type="entry name" value="Ribosomal_uL23_B"/>
    <property type="match status" value="1"/>
</dbReference>
<dbReference type="InterPro" id="IPR012677">
    <property type="entry name" value="Nucleotide-bd_a/b_plait_sf"/>
</dbReference>
<dbReference type="InterPro" id="IPR013025">
    <property type="entry name" value="Ribosomal_uL23-like"/>
</dbReference>
<dbReference type="InterPro" id="IPR012678">
    <property type="entry name" value="Ribosomal_uL23/eL15/eS24_sf"/>
</dbReference>
<dbReference type="InterPro" id="IPR001014">
    <property type="entry name" value="Ribosomal_uL23_CS"/>
</dbReference>
<dbReference type="NCBIfam" id="NF004363">
    <property type="entry name" value="PRK05738.2-4"/>
    <property type="match status" value="1"/>
</dbReference>
<dbReference type="PANTHER" id="PTHR11620">
    <property type="entry name" value="60S RIBOSOMAL PROTEIN L23A"/>
    <property type="match status" value="1"/>
</dbReference>
<dbReference type="Pfam" id="PF00276">
    <property type="entry name" value="Ribosomal_L23"/>
    <property type="match status" value="1"/>
</dbReference>
<dbReference type="SUPFAM" id="SSF54189">
    <property type="entry name" value="Ribosomal proteins S24e, L23 and L15e"/>
    <property type="match status" value="1"/>
</dbReference>
<dbReference type="PROSITE" id="PS00050">
    <property type="entry name" value="RIBOSOMAL_L23"/>
    <property type="match status" value="1"/>
</dbReference>
<gene>
    <name evidence="1" type="primary">rplW</name>
    <name type="ordered locus">LSL_1433</name>
</gene>
<accession>Q1WS92</accession>
<organism>
    <name type="scientific">Ligilactobacillus salivarius (strain UCC118)</name>
    <name type="common">Lactobacillus salivarius</name>
    <dbReference type="NCBI Taxonomy" id="362948"/>
    <lineage>
        <taxon>Bacteria</taxon>
        <taxon>Bacillati</taxon>
        <taxon>Bacillota</taxon>
        <taxon>Bacilli</taxon>
        <taxon>Lactobacillales</taxon>
        <taxon>Lactobacillaceae</taxon>
        <taxon>Ligilactobacillus</taxon>
    </lineage>
</organism>
<name>RL23_LIGS1</name>
<comment type="function">
    <text evidence="1">One of the early assembly proteins it binds 23S rRNA. One of the proteins that surrounds the polypeptide exit tunnel on the outside of the ribosome. Forms the main docking site for trigger factor binding to the ribosome.</text>
</comment>
<comment type="subunit">
    <text evidence="1">Part of the 50S ribosomal subunit. Contacts protein L29, and trigger factor when it is bound to the ribosome.</text>
</comment>
<comment type="similarity">
    <text evidence="1">Belongs to the universal ribosomal protein uL23 family.</text>
</comment>
<keyword id="KW-1185">Reference proteome</keyword>
<keyword id="KW-0687">Ribonucleoprotein</keyword>
<keyword id="KW-0689">Ribosomal protein</keyword>
<keyword id="KW-0694">RNA-binding</keyword>
<keyword id="KW-0699">rRNA-binding</keyword>
<reference key="1">
    <citation type="journal article" date="2006" name="Proc. Natl. Acad. Sci. U.S.A.">
        <title>Multireplicon genome architecture of Lactobacillus salivarius.</title>
        <authorList>
            <person name="Claesson M.J."/>
            <person name="Li Y."/>
            <person name="Leahy S."/>
            <person name="Canchaya C."/>
            <person name="van Pijkeren J.P."/>
            <person name="Cerdeno-Tarraga A.M."/>
            <person name="Parkhill J."/>
            <person name="Flynn S."/>
            <person name="O'Sullivan G.C."/>
            <person name="Collins J.K."/>
            <person name="Higgins D."/>
            <person name="Shanahan F."/>
            <person name="Fitzgerald G.F."/>
            <person name="van Sinderen D."/>
            <person name="O'Toole P.W."/>
        </authorList>
    </citation>
    <scope>NUCLEOTIDE SEQUENCE [LARGE SCALE GENOMIC DNA]</scope>
    <source>
        <strain>UCC118</strain>
    </source>
</reference>
<protein>
    <recommendedName>
        <fullName evidence="1">Large ribosomal subunit protein uL23</fullName>
    </recommendedName>
    <alternativeName>
        <fullName evidence="2">50S ribosomal protein L23</fullName>
    </alternativeName>
</protein>
<feature type="chain" id="PRO_1000068096" description="Large ribosomal subunit protein uL23">
    <location>
        <begin position="1"/>
        <end position="94"/>
    </location>
</feature>
<sequence length="94" mass="10915">MESRDVILRPVITEASMAELDNKRYTFDVDTRATKSQIKDAVEDIFEVKVAKVNVMNVKGKKKRMGRYEGYTKKRRKAIVTLTAESKEIKLFEE</sequence>
<evidence type="ECO:0000255" key="1">
    <source>
        <dbReference type="HAMAP-Rule" id="MF_01369"/>
    </source>
</evidence>
<evidence type="ECO:0000305" key="2"/>